<dbReference type="EC" id="6.3.5.-" evidence="1"/>
<dbReference type="EMBL" id="CP001402">
    <property type="protein sequence ID" value="ACR41856.1"/>
    <property type="molecule type" value="Genomic_DNA"/>
</dbReference>
<dbReference type="RefSeq" id="WP_012711275.1">
    <property type="nucleotide sequence ID" value="NC_012726.1"/>
</dbReference>
<dbReference type="SMR" id="C4KGZ2"/>
<dbReference type="GeneID" id="84061583"/>
<dbReference type="KEGG" id="sid:M164_1252"/>
<dbReference type="HOGENOM" id="CLU_105899_4_1_2"/>
<dbReference type="Proteomes" id="UP000001479">
    <property type="component" value="Chromosome"/>
</dbReference>
<dbReference type="GO" id="GO:0050566">
    <property type="term" value="F:asparaginyl-tRNA synthase (glutamine-hydrolyzing) activity"/>
    <property type="evidence" value="ECO:0007669"/>
    <property type="project" value="RHEA"/>
</dbReference>
<dbReference type="GO" id="GO:0005524">
    <property type="term" value="F:ATP binding"/>
    <property type="evidence" value="ECO:0007669"/>
    <property type="project" value="UniProtKB-KW"/>
</dbReference>
<dbReference type="GO" id="GO:0050567">
    <property type="term" value="F:glutaminyl-tRNA synthase (glutamine-hydrolyzing) activity"/>
    <property type="evidence" value="ECO:0007669"/>
    <property type="project" value="UniProtKB-UniRule"/>
</dbReference>
<dbReference type="GO" id="GO:0070681">
    <property type="term" value="P:glutaminyl-tRNAGln biosynthesis via transamidation"/>
    <property type="evidence" value="ECO:0007669"/>
    <property type="project" value="TreeGrafter"/>
</dbReference>
<dbReference type="GO" id="GO:0006450">
    <property type="term" value="P:regulation of translational fidelity"/>
    <property type="evidence" value="ECO:0007669"/>
    <property type="project" value="InterPro"/>
</dbReference>
<dbReference type="GO" id="GO:0006412">
    <property type="term" value="P:translation"/>
    <property type="evidence" value="ECO:0007669"/>
    <property type="project" value="UniProtKB-UniRule"/>
</dbReference>
<dbReference type="Gene3D" id="1.10.20.60">
    <property type="entry name" value="Glu-tRNAGln amidotransferase C subunit, N-terminal domain"/>
    <property type="match status" value="1"/>
</dbReference>
<dbReference type="HAMAP" id="MF_00122">
    <property type="entry name" value="GatC"/>
    <property type="match status" value="1"/>
</dbReference>
<dbReference type="InterPro" id="IPR036113">
    <property type="entry name" value="Asp/Glu-ADT_sf_sub_c"/>
</dbReference>
<dbReference type="InterPro" id="IPR003837">
    <property type="entry name" value="GatC"/>
</dbReference>
<dbReference type="NCBIfam" id="TIGR00135">
    <property type="entry name" value="gatC"/>
    <property type="match status" value="1"/>
</dbReference>
<dbReference type="NCBIfam" id="NF000684">
    <property type="entry name" value="PRK00034.3-4"/>
    <property type="match status" value="1"/>
</dbReference>
<dbReference type="PANTHER" id="PTHR15004">
    <property type="entry name" value="GLUTAMYL-TRNA(GLN) AMIDOTRANSFERASE SUBUNIT C, MITOCHONDRIAL"/>
    <property type="match status" value="1"/>
</dbReference>
<dbReference type="PANTHER" id="PTHR15004:SF0">
    <property type="entry name" value="GLUTAMYL-TRNA(GLN) AMIDOTRANSFERASE SUBUNIT C, MITOCHONDRIAL"/>
    <property type="match status" value="1"/>
</dbReference>
<dbReference type="Pfam" id="PF02686">
    <property type="entry name" value="GatC"/>
    <property type="match status" value="1"/>
</dbReference>
<dbReference type="SUPFAM" id="SSF141000">
    <property type="entry name" value="Glu-tRNAGln amidotransferase C subunit"/>
    <property type="match status" value="1"/>
</dbReference>
<keyword id="KW-0067">ATP-binding</keyword>
<keyword id="KW-0436">Ligase</keyword>
<keyword id="KW-0547">Nucleotide-binding</keyword>
<keyword id="KW-0648">Protein biosynthesis</keyword>
<gene>
    <name evidence="1" type="primary">gatC</name>
    <name type="ordered locus">M164_1252</name>
</gene>
<reference key="1">
    <citation type="journal article" date="2009" name="Proc. Natl. Acad. Sci. U.S.A.">
        <title>Biogeography of the Sulfolobus islandicus pan-genome.</title>
        <authorList>
            <person name="Reno M.L."/>
            <person name="Held N.L."/>
            <person name="Fields C.J."/>
            <person name="Burke P.V."/>
            <person name="Whitaker R.J."/>
        </authorList>
    </citation>
    <scope>NUCLEOTIDE SEQUENCE [LARGE SCALE GENOMIC DNA]</scope>
    <source>
        <strain>M.16.4 / Kamchatka #3</strain>
    </source>
</reference>
<proteinExistence type="inferred from homology"/>
<evidence type="ECO:0000255" key="1">
    <source>
        <dbReference type="HAMAP-Rule" id="MF_00122"/>
    </source>
</evidence>
<evidence type="ECO:0000256" key="2">
    <source>
        <dbReference type="SAM" id="MobiDB-lite"/>
    </source>
</evidence>
<organism>
    <name type="scientific">Saccharolobus islandicus (strain M.16.4 / Kamchatka #3)</name>
    <name type="common">Sulfolobus islandicus</name>
    <dbReference type="NCBI Taxonomy" id="426118"/>
    <lineage>
        <taxon>Archaea</taxon>
        <taxon>Thermoproteota</taxon>
        <taxon>Thermoprotei</taxon>
        <taxon>Sulfolobales</taxon>
        <taxon>Sulfolobaceae</taxon>
        <taxon>Saccharolobus</taxon>
    </lineage>
</organism>
<sequence length="97" mass="11396">MKIEVNKNLIKHLENLSLIQLSQNEEKMLENDITNIIKFFEKINELDLSNVEPLFHPLPQGRLRKDTPRDPLDRENALKNVKRKENGYIVGPRTYGE</sequence>
<name>GATC_SACI6</name>
<accession>C4KGZ2</accession>
<comment type="function">
    <text evidence="1">Allows the formation of correctly charged Asn-tRNA(Asn) or Gln-tRNA(Gln) through the transamidation of misacylated Asp-tRNA(Asn) or Glu-tRNA(Gln) in organisms which lack either or both of asparaginyl-tRNA or glutaminyl-tRNA synthetases. The reaction takes place in the presence of glutamine and ATP through an activated phospho-Asp-tRNA(Asn) or phospho-Glu-tRNA(Gln).</text>
</comment>
<comment type="catalytic activity">
    <reaction evidence="1">
        <text>L-glutamyl-tRNA(Gln) + L-glutamine + ATP + H2O = L-glutaminyl-tRNA(Gln) + L-glutamate + ADP + phosphate + H(+)</text>
        <dbReference type="Rhea" id="RHEA:17521"/>
        <dbReference type="Rhea" id="RHEA-COMP:9681"/>
        <dbReference type="Rhea" id="RHEA-COMP:9684"/>
        <dbReference type="ChEBI" id="CHEBI:15377"/>
        <dbReference type="ChEBI" id="CHEBI:15378"/>
        <dbReference type="ChEBI" id="CHEBI:29985"/>
        <dbReference type="ChEBI" id="CHEBI:30616"/>
        <dbReference type="ChEBI" id="CHEBI:43474"/>
        <dbReference type="ChEBI" id="CHEBI:58359"/>
        <dbReference type="ChEBI" id="CHEBI:78520"/>
        <dbReference type="ChEBI" id="CHEBI:78521"/>
        <dbReference type="ChEBI" id="CHEBI:456216"/>
    </reaction>
</comment>
<comment type="catalytic activity">
    <reaction evidence="1">
        <text>L-aspartyl-tRNA(Asn) + L-glutamine + ATP + H2O = L-asparaginyl-tRNA(Asn) + L-glutamate + ADP + phosphate + 2 H(+)</text>
        <dbReference type="Rhea" id="RHEA:14513"/>
        <dbReference type="Rhea" id="RHEA-COMP:9674"/>
        <dbReference type="Rhea" id="RHEA-COMP:9677"/>
        <dbReference type="ChEBI" id="CHEBI:15377"/>
        <dbReference type="ChEBI" id="CHEBI:15378"/>
        <dbReference type="ChEBI" id="CHEBI:29985"/>
        <dbReference type="ChEBI" id="CHEBI:30616"/>
        <dbReference type="ChEBI" id="CHEBI:43474"/>
        <dbReference type="ChEBI" id="CHEBI:58359"/>
        <dbReference type="ChEBI" id="CHEBI:78515"/>
        <dbReference type="ChEBI" id="CHEBI:78516"/>
        <dbReference type="ChEBI" id="CHEBI:456216"/>
    </reaction>
</comment>
<comment type="subunit">
    <text evidence="1">Heterotrimer of A, B and C subunits.</text>
</comment>
<comment type="similarity">
    <text evidence="1">Belongs to the GatC family.</text>
</comment>
<protein>
    <recommendedName>
        <fullName evidence="1">Aspartyl/glutamyl-tRNA(Asn/Gln) amidotransferase subunit C</fullName>
        <shortName evidence="1">Asp/Glu-ADT subunit C</shortName>
        <ecNumber evidence="1">6.3.5.-</ecNumber>
    </recommendedName>
</protein>
<feature type="chain" id="PRO_1000203081" description="Aspartyl/glutamyl-tRNA(Asn/Gln) amidotransferase subunit C">
    <location>
        <begin position="1"/>
        <end position="97"/>
    </location>
</feature>
<feature type="region of interest" description="Disordered" evidence="2">
    <location>
        <begin position="58"/>
        <end position="78"/>
    </location>
</feature>
<feature type="compositionally biased region" description="Basic and acidic residues" evidence="2">
    <location>
        <begin position="63"/>
        <end position="77"/>
    </location>
</feature>